<feature type="chain" id="PRO_0000225465" description="Protein-glutamate methylesterase/protein-glutamine glutaminase">
    <location>
        <begin position="1"/>
        <end position="353"/>
    </location>
</feature>
<feature type="domain" description="Response regulatory" evidence="1">
    <location>
        <begin position="6"/>
        <end position="123"/>
    </location>
</feature>
<feature type="domain" description="CheB-type methylesterase" evidence="1">
    <location>
        <begin position="159"/>
        <end position="351"/>
    </location>
</feature>
<feature type="active site" evidence="1">
    <location>
        <position position="171"/>
    </location>
</feature>
<feature type="active site" evidence="1">
    <location>
        <position position="197"/>
    </location>
</feature>
<feature type="active site" evidence="1">
    <location>
        <position position="293"/>
    </location>
</feature>
<feature type="modified residue" description="4-aspartylphosphate" evidence="1">
    <location>
        <position position="57"/>
    </location>
</feature>
<evidence type="ECO:0000255" key="1">
    <source>
        <dbReference type="HAMAP-Rule" id="MF_00099"/>
    </source>
</evidence>
<dbReference type="EC" id="3.1.1.61" evidence="1"/>
<dbReference type="EC" id="3.5.1.44" evidence="1"/>
<dbReference type="EMBL" id="CP000142">
    <property type="protein sequence ID" value="ABA88449.1"/>
    <property type="molecule type" value="Genomic_DNA"/>
</dbReference>
<dbReference type="RefSeq" id="WP_011340923.1">
    <property type="nucleotide sequence ID" value="NC_007498.2"/>
</dbReference>
<dbReference type="SMR" id="Q3A5A8"/>
<dbReference type="STRING" id="338963.Pcar_1200"/>
<dbReference type="KEGG" id="pca:Pcar_1200"/>
<dbReference type="eggNOG" id="COG2201">
    <property type="taxonomic scope" value="Bacteria"/>
</dbReference>
<dbReference type="HOGENOM" id="CLU_000445_51_0_7"/>
<dbReference type="OrthoDB" id="9793421at2"/>
<dbReference type="Proteomes" id="UP000002534">
    <property type="component" value="Chromosome"/>
</dbReference>
<dbReference type="GO" id="GO:0005737">
    <property type="term" value="C:cytoplasm"/>
    <property type="evidence" value="ECO:0007669"/>
    <property type="project" value="UniProtKB-SubCell"/>
</dbReference>
<dbReference type="GO" id="GO:0000156">
    <property type="term" value="F:phosphorelay response regulator activity"/>
    <property type="evidence" value="ECO:0007669"/>
    <property type="project" value="InterPro"/>
</dbReference>
<dbReference type="GO" id="GO:0008984">
    <property type="term" value="F:protein-glutamate methylesterase activity"/>
    <property type="evidence" value="ECO:0007669"/>
    <property type="project" value="UniProtKB-UniRule"/>
</dbReference>
<dbReference type="GO" id="GO:0050568">
    <property type="term" value="F:protein-glutamine glutaminase activity"/>
    <property type="evidence" value="ECO:0007669"/>
    <property type="project" value="UniProtKB-UniRule"/>
</dbReference>
<dbReference type="GO" id="GO:0006935">
    <property type="term" value="P:chemotaxis"/>
    <property type="evidence" value="ECO:0007669"/>
    <property type="project" value="UniProtKB-UniRule"/>
</dbReference>
<dbReference type="CDD" id="cd16432">
    <property type="entry name" value="CheB_Rec"/>
    <property type="match status" value="1"/>
</dbReference>
<dbReference type="CDD" id="cd17541">
    <property type="entry name" value="REC_CheB-like"/>
    <property type="match status" value="1"/>
</dbReference>
<dbReference type="Gene3D" id="3.40.50.2300">
    <property type="match status" value="1"/>
</dbReference>
<dbReference type="Gene3D" id="3.40.50.180">
    <property type="entry name" value="Methylesterase CheB, C-terminal domain"/>
    <property type="match status" value="1"/>
</dbReference>
<dbReference type="HAMAP" id="MF_00099">
    <property type="entry name" value="CheB_chemtxs"/>
    <property type="match status" value="1"/>
</dbReference>
<dbReference type="InterPro" id="IPR008248">
    <property type="entry name" value="CheB-like"/>
</dbReference>
<dbReference type="InterPro" id="IPR035909">
    <property type="entry name" value="CheB_C"/>
</dbReference>
<dbReference type="InterPro" id="IPR011006">
    <property type="entry name" value="CheY-like_superfamily"/>
</dbReference>
<dbReference type="InterPro" id="IPR000673">
    <property type="entry name" value="Sig_transdc_resp-reg_Me-estase"/>
</dbReference>
<dbReference type="InterPro" id="IPR001789">
    <property type="entry name" value="Sig_transdc_resp-reg_receiver"/>
</dbReference>
<dbReference type="NCBIfam" id="NF001965">
    <property type="entry name" value="PRK00742.1"/>
    <property type="match status" value="1"/>
</dbReference>
<dbReference type="NCBIfam" id="NF009206">
    <property type="entry name" value="PRK12555.1"/>
    <property type="match status" value="1"/>
</dbReference>
<dbReference type="PANTHER" id="PTHR42872">
    <property type="entry name" value="PROTEIN-GLUTAMATE METHYLESTERASE/PROTEIN-GLUTAMINE GLUTAMINASE"/>
    <property type="match status" value="1"/>
</dbReference>
<dbReference type="PANTHER" id="PTHR42872:SF6">
    <property type="entry name" value="PROTEIN-GLUTAMATE METHYLESTERASE_PROTEIN-GLUTAMINE GLUTAMINASE"/>
    <property type="match status" value="1"/>
</dbReference>
<dbReference type="Pfam" id="PF01339">
    <property type="entry name" value="CheB_methylest"/>
    <property type="match status" value="1"/>
</dbReference>
<dbReference type="Pfam" id="PF00072">
    <property type="entry name" value="Response_reg"/>
    <property type="match status" value="1"/>
</dbReference>
<dbReference type="PIRSF" id="PIRSF000876">
    <property type="entry name" value="RR_chemtxs_CheB"/>
    <property type="match status" value="1"/>
</dbReference>
<dbReference type="SMART" id="SM00448">
    <property type="entry name" value="REC"/>
    <property type="match status" value="1"/>
</dbReference>
<dbReference type="SUPFAM" id="SSF52172">
    <property type="entry name" value="CheY-like"/>
    <property type="match status" value="1"/>
</dbReference>
<dbReference type="SUPFAM" id="SSF52738">
    <property type="entry name" value="Methylesterase CheB, C-terminal domain"/>
    <property type="match status" value="1"/>
</dbReference>
<dbReference type="PROSITE" id="PS50122">
    <property type="entry name" value="CHEB"/>
    <property type="match status" value="1"/>
</dbReference>
<dbReference type="PROSITE" id="PS50110">
    <property type="entry name" value="RESPONSE_REGULATORY"/>
    <property type="match status" value="1"/>
</dbReference>
<keyword id="KW-0145">Chemotaxis</keyword>
<keyword id="KW-0963">Cytoplasm</keyword>
<keyword id="KW-0378">Hydrolase</keyword>
<keyword id="KW-0597">Phosphoprotein</keyword>
<keyword id="KW-1185">Reference proteome</keyword>
<protein>
    <recommendedName>
        <fullName evidence="1">Protein-glutamate methylesterase/protein-glutamine glutaminase</fullName>
        <ecNumber evidence="1">3.1.1.61</ecNumber>
        <ecNumber evidence="1">3.5.1.44</ecNumber>
    </recommendedName>
</protein>
<gene>
    <name evidence="1" type="primary">cheB</name>
    <name type="ordered locus">Pcar_1200</name>
</gene>
<comment type="function">
    <text evidence="1">Involved in chemotaxis. Part of a chemotaxis signal transduction system that modulates chemotaxis in response to various stimuli. Catalyzes the demethylation of specific methylglutamate residues introduced into the chemoreceptors (methyl-accepting chemotaxis proteins or MCP) by CheR. Also mediates the irreversible deamidation of specific glutamine residues to glutamic acid.</text>
</comment>
<comment type="catalytic activity">
    <reaction evidence="1">
        <text>[protein]-L-glutamate 5-O-methyl ester + H2O = L-glutamyl-[protein] + methanol + H(+)</text>
        <dbReference type="Rhea" id="RHEA:23236"/>
        <dbReference type="Rhea" id="RHEA-COMP:10208"/>
        <dbReference type="Rhea" id="RHEA-COMP:10311"/>
        <dbReference type="ChEBI" id="CHEBI:15377"/>
        <dbReference type="ChEBI" id="CHEBI:15378"/>
        <dbReference type="ChEBI" id="CHEBI:17790"/>
        <dbReference type="ChEBI" id="CHEBI:29973"/>
        <dbReference type="ChEBI" id="CHEBI:82795"/>
        <dbReference type="EC" id="3.1.1.61"/>
    </reaction>
</comment>
<comment type="catalytic activity">
    <reaction evidence="1">
        <text>L-glutaminyl-[protein] + H2O = L-glutamyl-[protein] + NH4(+)</text>
        <dbReference type="Rhea" id="RHEA:16441"/>
        <dbReference type="Rhea" id="RHEA-COMP:10207"/>
        <dbReference type="Rhea" id="RHEA-COMP:10208"/>
        <dbReference type="ChEBI" id="CHEBI:15377"/>
        <dbReference type="ChEBI" id="CHEBI:28938"/>
        <dbReference type="ChEBI" id="CHEBI:29973"/>
        <dbReference type="ChEBI" id="CHEBI:30011"/>
        <dbReference type="EC" id="3.5.1.44"/>
    </reaction>
</comment>
<comment type="subcellular location">
    <subcellularLocation>
        <location evidence="1">Cytoplasm</location>
    </subcellularLocation>
</comment>
<comment type="domain">
    <text evidence="1">Contains a C-terminal catalytic domain, and an N-terminal region which modulates catalytic activity.</text>
</comment>
<comment type="PTM">
    <text evidence="1">Phosphorylated by CheA. Phosphorylation of the N-terminal regulatory domain activates the methylesterase activity.</text>
</comment>
<comment type="similarity">
    <text evidence="1">Belongs to the CheB family.</text>
</comment>
<name>CHEB_SYNC1</name>
<sequence length="353" mass="37746">MPKKIRVLVIDDSALVRQILSKGLALDPSIEVVGTAGDPYIARDKIVKLQPDVLTLDVEMPRMDGVDFLRRLMPQYPLPVVMVSSLTQKGKQITLDSLDAGAVDFVSKPTSDIARGLKAMLSELCAKVKLASTANVSHWKAARTVVPARLKTLEKRALAESTDKVIAIGASTGGTEAIRKIIAQFPATMPGVVIVQHMPAGFTRLFAERLNQLCAMEVKEAATGDRIMPGRVLIGPGGFHMKVVRSGGFYQVRCEPGPPVKGHCPSVDVMMHSVAKHVGGNAIGVMLTGMGSDGAEGMRAMREAGARNLAQDEASCVVFGMPKVAYEMGGAHSLVSLDSMAPRIVDLLSERRI</sequence>
<proteinExistence type="inferred from homology"/>
<organism>
    <name type="scientific">Syntrophotalea carbinolica (strain DSM 2380 / NBRC 103641 / GraBd1)</name>
    <name type="common">Pelobacter carbinolicus</name>
    <dbReference type="NCBI Taxonomy" id="338963"/>
    <lineage>
        <taxon>Bacteria</taxon>
        <taxon>Pseudomonadati</taxon>
        <taxon>Thermodesulfobacteriota</taxon>
        <taxon>Desulfuromonadia</taxon>
        <taxon>Desulfuromonadales</taxon>
        <taxon>Syntrophotaleaceae</taxon>
        <taxon>Syntrophotalea</taxon>
    </lineage>
</organism>
<accession>Q3A5A8</accession>
<reference key="1">
    <citation type="submission" date="2005-10" db="EMBL/GenBank/DDBJ databases">
        <title>Complete sequence of Pelobacter carbinolicus DSM 2380.</title>
        <authorList>
            <person name="Copeland A."/>
            <person name="Lucas S."/>
            <person name="Lapidus A."/>
            <person name="Barry K."/>
            <person name="Detter J.C."/>
            <person name="Glavina T."/>
            <person name="Hammon N."/>
            <person name="Israni S."/>
            <person name="Pitluck S."/>
            <person name="Chertkov O."/>
            <person name="Schmutz J."/>
            <person name="Larimer F."/>
            <person name="Land M."/>
            <person name="Kyrpides N."/>
            <person name="Ivanova N."/>
            <person name="Richardson P."/>
        </authorList>
    </citation>
    <scope>NUCLEOTIDE SEQUENCE [LARGE SCALE GENOMIC DNA]</scope>
    <source>
        <strain>DSM 2380 / NBRC 103641 / GraBd1</strain>
    </source>
</reference>